<accession>Q95176</accession>
<proteinExistence type="inferred from homology"/>
<protein>
    <recommendedName>
        <fullName>Major prion protein</fullName>
        <shortName>PrP</shortName>
    </recommendedName>
    <alternativeName>
        <fullName>PrP27-30</fullName>
    </alternativeName>
    <alternativeName>
        <fullName>PrP33-35C</fullName>
    </alternativeName>
    <cdAntigenName>CD230</cdAntigenName>
</protein>
<evidence type="ECO:0000250" key="1"/>
<evidence type="ECO:0000250" key="2">
    <source>
        <dbReference type="UniProtKB" id="P04156"/>
    </source>
</evidence>
<evidence type="ECO:0000250" key="3">
    <source>
        <dbReference type="UniProtKB" id="P04273"/>
    </source>
</evidence>
<evidence type="ECO:0000250" key="4">
    <source>
        <dbReference type="UniProtKB" id="P04925"/>
    </source>
</evidence>
<evidence type="ECO:0000255" key="5"/>
<evidence type="ECO:0000256" key="6">
    <source>
        <dbReference type="SAM" id="MobiDB-lite"/>
    </source>
</evidence>
<evidence type="ECO:0000305" key="7"/>
<name>PRIO_CERAT</name>
<dbReference type="EMBL" id="U75385">
    <property type="protein sequence ID" value="AAB50628.1"/>
    <property type="molecule type" value="Genomic_DNA"/>
</dbReference>
<dbReference type="SMR" id="Q95176"/>
<dbReference type="STRING" id="9531.ENSCATP00000038073"/>
<dbReference type="GlyCosmos" id="Q95176">
    <property type="glycosylation" value="2 sites, No reported glycans"/>
</dbReference>
<dbReference type="Proteomes" id="UP000233060">
    <property type="component" value="Unassembled WGS sequence"/>
</dbReference>
<dbReference type="GO" id="GO:0005794">
    <property type="term" value="C:Golgi apparatus"/>
    <property type="evidence" value="ECO:0007669"/>
    <property type="project" value="UniProtKB-SubCell"/>
</dbReference>
<dbReference type="GO" id="GO:0005886">
    <property type="term" value="C:plasma membrane"/>
    <property type="evidence" value="ECO:0007669"/>
    <property type="project" value="UniProtKB-SubCell"/>
</dbReference>
<dbReference type="GO" id="GO:0098552">
    <property type="term" value="C:side of membrane"/>
    <property type="evidence" value="ECO:0007669"/>
    <property type="project" value="UniProtKB-KW"/>
</dbReference>
<dbReference type="GO" id="GO:0005507">
    <property type="term" value="F:copper ion binding"/>
    <property type="evidence" value="ECO:0000250"/>
    <property type="project" value="UniProtKB"/>
</dbReference>
<dbReference type="GO" id="GO:0051260">
    <property type="term" value="P:protein homooligomerization"/>
    <property type="evidence" value="ECO:0007669"/>
    <property type="project" value="InterPro"/>
</dbReference>
<dbReference type="FunFam" id="1.10.790.10:FF:000001">
    <property type="entry name" value="Major prion protein"/>
    <property type="match status" value="1"/>
</dbReference>
<dbReference type="Gene3D" id="1.10.790.10">
    <property type="entry name" value="Prion/Doppel protein, beta-ribbon domain"/>
    <property type="match status" value="1"/>
</dbReference>
<dbReference type="InterPro" id="IPR000817">
    <property type="entry name" value="Prion"/>
</dbReference>
<dbReference type="InterPro" id="IPR036924">
    <property type="entry name" value="Prion/Doppel_b-ribbon_dom_sf"/>
</dbReference>
<dbReference type="InterPro" id="IPR022416">
    <property type="entry name" value="Prion/Doppel_prot_b-ribbon_dom"/>
</dbReference>
<dbReference type="InterPro" id="IPR020949">
    <property type="entry name" value="Prion_copper_b_octapeptide"/>
</dbReference>
<dbReference type="InterPro" id="IPR025860">
    <property type="entry name" value="Prion_N"/>
</dbReference>
<dbReference type="PANTHER" id="PTHR15506">
    <property type="entry name" value="DOPPEL PRION"/>
    <property type="match status" value="1"/>
</dbReference>
<dbReference type="PANTHER" id="PTHR15506:SF2">
    <property type="entry name" value="MAJOR PRION PROTEIN"/>
    <property type="match status" value="1"/>
</dbReference>
<dbReference type="Pfam" id="PF00377">
    <property type="entry name" value="Prion"/>
    <property type="match status" value="1"/>
</dbReference>
<dbReference type="Pfam" id="PF11587">
    <property type="entry name" value="Prion_bPrPp"/>
    <property type="match status" value="1"/>
</dbReference>
<dbReference type="Pfam" id="PF03991">
    <property type="entry name" value="Prion_octapep"/>
    <property type="match status" value="1"/>
</dbReference>
<dbReference type="PRINTS" id="PR00341">
    <property type="entry name" value="PRION"/>
</dbReference>
<dbReference type="SMART" id="SM00157">
    <property type="entry name" value="PRP"/>
    <property type="match status" value="1"/>
</dbReference>
<dbReference type="SUPFAM" id="SSF54098">
    <property type="entry name" value="Prion-like"/>
    <property type="match status" value="1"/>
</dbReference>
<dbReference type="PROSITE" id="PS00291">
    <property type="entry name" value="PRION_1"/>
    <property type="match status" value="1"/>
</dbReference>
<dbReference type="PROSITE" id="PS00706">
    <property type="entry name" value="PRION_2"/>
    <property type="match status" value="1"/>
</dbReference>
<feature type="signal peptide" evidence="1">
    <location>
        <begin position="1" status="less than"/>
        <end position="15"/>
    </location>
</feature>
<feature type="chain" id="PRO_0000025661" description="Major prion protein">
    <location>
        <begin position="16"/>
        <end position="223"/>
    </location>
</feature>
<feature type="propeptide" id="PRO_0000025662" description="Removed in mature form" evidence="1">
    <location>
        <begin position="224"/>
        <end position="246"/>
    </location>
</feature>
<feature type="repeat" description="1">
    <location>
        <begin position="44"/>
        <end position="52"/>
    </location>
</feature>
<feature type="repeat" description="2">
    <location>
        <begin position="53"/>
        <end position="60"/>
    </location>
</feature>
<feature type="repeat" description="3">
    <location>
        <begin position="61"/>
        <end position="68"/>
    </location>
</feature>
<feature type="repeat" description="4">
    <location>
        <begin position="69"/>
        <end position="76"/>
    </location>
</feature>
<feature type="repeat" description="5">
    <location>
        <begin position="77"/>
        <end position="84"/>
    </location>
</feature>
<feature type="region of interest" description="Interaction with GRB2, ERI3 and SYN1" evidence="4">
    <location>
        <begin position="16"/>
        <end position="223"/>
    </location>
</feature>
<feature type="region of interest" description="Disordered" evidence="6">
    <location>
        <begin position="18"/>
        <end position="102"/>
    </location>
</feature>
<feature type="region of interest" description="5 X 8 AA tandem repeats of P-H-G-G-G-W-G-Q">
    <location>
        <begin position="44"/>
        <end position="84"/>
    </location>
</feature>
<feature type="compositionally biased region" description="Gly residues" evidence="6">
    <location>
        <begin position="45"/>
        <end position="88"/>
    </location>
</feature>
<feature type="compositionally biased region" description="Basic residues" evidence="6">
    <location>
        <begin position="91"/>
        <end position="102"/>
    </location>
</feature>
<feature type="binding site" evidence="2">
    <location>
        <position position="54"/>
    </location>
    <ligand>
        <name>Cu(2+)</name>
        <dbReference type="ChEBI" id="CHEBI:29036"/>
        <label>1</label>
    </ligand>
</feature>
<feature type="binding site" evidence="2">
    <location>
        <position position="55"/>
    </location>
    <ligand>
        <name>Cu(2+)</name>
        <dbReference type="ChEBI" id="CHEBI:29036"/>
        <label>1</label>
    </ligand>
</feature>
<feature type="binding site" evidence="2">
    <location>
        <position position="56"/>
    </location>
    <ligand>
        <name>Cu(2+)</name>
        <dbReference type="ChEBI" id="CHEBI:29036"/>
        <label>1</label>
    </ligand>
</feature>
<feature type="binding site" evidence="2">
    <location>
        <position position="62"/>
    </location>
    <ligand>
        <name>Cu(2+)</name>
        <dbReference type="ChEBI" id="CHEBI:29036"/>
        <label>2</label>
    </ligand>
</feature>
<feature type="binding site" evidence="2">
    <location>
        <position position="63"/>
    </location>
    <ligand>
        <name>Cu(2+)</name>
        <dbReference type="ChEBI" id="CHEBI:29036"/>
        <label>2</label>
    </ligand>
</feature>
<feature type="binding site" evidence="2">
    <location>
        <position position="64"/>
    </location>
    <ligand>
        <name>Cu(2+)</name>
        <dbReference type="ChEBI" id="CHEBI:29036"/>
        <label>2</label>
    </ligand>
</feature>
<feature type="binding site" evidence="2">
    <location>
        <position position="70"/>
    </location>
    <ligand>
        <name>Cu(2+)</name>
        <dbReference type="ChEBI" id="CHEBI:29036"/>
        <label>3</label>
    </ligand>
</feature>
<feature type="binding site" evidence="2">
    <location>
        <position position="71"/>
    </location>
    <ligand>
        <name>Cu(2+)</name>
        <dbReference type="ChEBI" id="CHEBI:29036"/>
        <label>3</label>
    </ligand>
</feature>
<feature type="binding site" evidence="2">
    <location>
        <position position="72"/>
    </location>
    <ligand>
        <name>Cu(2+)</name>
        <dbReference type="ChEBI" id="CHEBI:29036"/>
        <label>3</label>
    </ligand>
</feature>
<feature type="binding site" evidence="2">
    <location>
        <position position="78"/>
    </location>
    <ligand>
        <name>Cu(2+)</name>
        <dbReference type="ChEBI" id="CHEBI:29036"/>
        <label>4</label>
    </ligand>
</feature>
<feature type="binding site" evidence="2">
    <location>
        <position position="79"/>
    </location>
    <ligand>
        <name>Cu(2+)</name>
        <dbReference type="ChEBI" id="CHEBI:29036"/>
        <label>4</label>
    </ligand>
</feature>
<feature type="binding site" evidence="2">
    <location>
        <position position="80"/>
    </location>
    <ligand>
        <name>Cu(2+)</name>
        <dbReference type="ChEBI" id="CHEBI:29036"/>
        <label>4</label>
    </ligand>
</feature>
<feature type="lipid moiety-binding region" description="GPI-anchor amidated serine" evidence="3">
    <location>
        <position position="223"/>
    </location>
</feature>
<feature type="glycosylation site" description="N-linked (GlcNAc...) asparagine" evidence="5">
    <location>
        <position position="174"/>
    </location>
</feature>
<feature type="glycosylation site" description="N-linked (GlcNAc...) asparagine" evidence="5">
    <location>
        <position position="190"/>
    </location>
</feature>
<feature type="disulfide bond" evidence="3">
    <location>
        <begin position="172"/>
        <end position="207"/>
    </location>
</feature>
<feature type="non-terminal residue">
    <location>
        <position position="1"/>
    </location>
</feature>
<reference key="1">
    <citation type="submission" date="1996-11" db="EMBL/GenBank/DDBJ databases">
        <title>Evidence for an increased substitution rate of the hominoid prion protein gene during the period of brain expansion.</title>
        <authorList>
            <person name="van der Kuyl A.C."/>
            <person name="Dekker J.T."/>
            <person name="Goudsmit J."/>
        </authorList>
    </citation>
    <scope>NUCLEOTIDE SEQUENCE [GENOMIC DNA]</scope>
</reference>
<keyword id="KW-0034">Amyloid</keyword>
<keyword id="KW-1003">Cell membrane</keyword>
<keyword id="KW-0186">Copper</keyword>
<keyword id="KW-1015">Disulfide bond</keyword>
<keyword id="KW-0325">Glycoprotein</keyword>
<keyword id="KW-0333">Golgi apparatus</keyword>
<keyword id="KW-0336">GPI-anchor</keyword>
<keyword id="KW-0449">Lipoprotein</keyword>
<keyword id="KW-0472">Membrane</keyword>
<keyword id="KW-0479">Metal-binding</keyword>
<keyword id="KW-0640">Prion</keyword>
<keyword id="KW-1185">Reference proteome</keyword>
<keyword id="KW-0677">Repeat</keyword>
<keyword id="KW-0732">Signal</keyword>
<keyword id="KW-0862">Zinc</keyword>
<sequence length="246" mass="26914">MLVLFVATWSDLGLCKKRPKPGGWNTGGSRYPGQGSPGGNRYPPQGGGGWGQPHGGGWGQPHGGGWGQPHGGGWGQPHGGGWGQGGGTHNQWHKPSKPKTSMKHMAGAAAAGAVVGGLGGYMLGSAMSRPLIHFGNEYEDRYYRENMYRYPNQVYYRPVDQYSNQNNFVHDCVNITIKQHTVTTTTKGENFTETDVKMMERVVEQMCITQYEKESQAYYQRGSSMVLFSSPPVILLISFLIFLIVG</sequence>
<organism>
    <name type="scientific">Cercocebus atys</name>
    <name type="common">Sooty mangabey</name>
    <name type="synonym">Cercocebus torquatus atys</name>
    <dbReference type="NCBI Taxonomy" id="9531"/>
    <lineage>
        <taxon>Eukaryota</taxon>
        <taxon>Metazoa</taxon>
        <taxon>Chordata</taxon>
        <taxon>Craniata</taxon>
        <taxon>Vertebrata</taxon>
        <taxon>Euteleostomi</taxon>
        <taxon>Mammalia</taxon>
        <taxon>Eutheria</taxon>
        <taxon>Euarchontoglires</taxon>
        <taxon>Primates</taxon>
        <taxon>Haplorrhini</taxon>
        <taxon>Catarrhini</taxon>
        <taxon>Cercopithecidae</taxon>
        <taxon>Cercopithecinae</taxon>
        <taxon>Cercocebus</taxon>
    </lineage>
</organism>
<gene>
    <name type="primary">PRNP</name>
    <name type="synonym">PRP</name>
</gene>
<comment type="function">
    <text evidence="2 4">Its primary physiological function is unclear. Has cytoprotective activity against internal or environmental stresses. May play a role in neuronal development and synaptic plasticity. May be required for neuronal myelin sheath maintenance. May play a role in iron uptake and iron homeostasis. Soluble oligomers are toxic to cultured neuroblastoma cells and induce apoptosis (in vitro). Association with GPC1 (via its heparan sulfate chains) targets PRNP to lipid rafts. Also provides Cu(2+) or Zn(2+) for the ascorbate-mediated GPC1 deaminase degradation of its heparan sulfate side chains (By similarity).</text>
</comment>
<comment type="subunit">
    <text evidence="2 4">Monomer and homodimer. Has a tendency to aggregate into amyloid fibrils containing a cross-beta spine, formed by a steric zipper of superposed beta-strands. Soluble oligomers may represent an intermediate stage on the path to fibril formation. Copper binding may promote oligomerization. Interacts with GRB2, APP, ERI3/PRNPIP and SYN1. Mislocalized cytosolically exposed PrP interacts with MGRN1; this interaction alters MGRN1 subcellular location and causes lysosomal enlargement. Interacts with KIAA1191.</text>
</comment>
<comment type="subcellular location">
    <subcellularLocation>
        <location evidence="2">Cell membrane</location>
        <topology evidence="2">Lipid-anchor</topology>
        <topology evidence="2">GPI-anchor</topology>
    </subcellularLocation>
    <subcellularLocation>
        <location evidence="4">Golgi apparatus</location>
    </subcellularLocation>
    <text evidence="2">Targeted to lipid rafts via association with the heparan sulfate chains of GPC1. Colocates, in the presence of Cu(2+), to vesicles in para- and perinuclear regions, where both proteins undergo internalization. Heparin displaces PRNP from lipid rafts and promotes endocytosis.</text>
</comment>
<comment type="domain">
    <text evidence="2">The normal, monomeric form has a mainly alpha-helical structure. The disease-associated, protease-resistant form forms amyloid fibrils containing a cross-beta spine, formed by a steric zipper of superposed beta-strands. Disease mutations may favor intermolecular contacts via short beta strands, and may thereby trigger oligomerization.</text>
</comment>
<comment type="domain">
    <text evidence="2">Contains an N-terminal region composed of octamer repeats. At low copper concentrations, the sidechains of His residues from three or four repeats contribute to the binding of a single copper ion. Alternatively, a copper ion can be bound by interaction with the sidechain and backbone amide nitrogen of a single His residue. The observed copper binding stoichiometry suggests that two repeat regions cooperate to stabilize the binding of a single copper ion. At higher copper concentrations, each octamer can bind one copper ion by interactions with the His sidechain and Gly backbone atoms. A mixture of binding types may occur, especially in the case of octamer repeat expansion. Copper binding may stabilize the conformation of this region and may promote oligomerization.</text>
</comment>
<comment type="disease">
    <text evidence="7">PrP is found in high quantity in the brain of humans and animals infected with the degenerative neurological diseases kuru, Creutzfeldt-Jakob disease (CJD), Gerstmann-Straussler syndrome (GSS), scrapie, bovine spongiform encephalopathy (BSE), transmissible mink encephalopathy (TME), etc.</text>
</comment>
<comment type="similarity">
    <text evidence="7">Belongs to the prion family.</text>
</comment>